<organismHost>
    <name type="scientific">Homo sapiens</name>
    <name type="common">Human</name>
    <dbReference type="NCBI Taxonomy" id="9606"/>
</organismHost>
<keyword id="KW-0002">3D-structure</keyword>
<keyword id="KW-0167">Capsid protein</keyword>
<keyword id="KW-1048">Host nucleus</keyword>
<keyword id="KW-1185">Reference proteome</keyword>
<keyword id="KW-0946">Virion</keyword>
<sequence>MDLKVVVSLSSRLYTDEIAKMQQRIGCILPLASTHGTQNVQGLGLGQVYSLETVPDYVSMYNYLSDCTLAVLDEVSVDSLILTKIVPGQTYAIKNKYQPFFQWHGTGSLSVMPPVFGREHATVKLESNDVDIVFPMVLPTPIAEEVLQKILLFNVYSRVVMQAPGNADMLDVHMHLGSVSYLGHHYELALPEVPGPLGLALLDNLSLYFCIMVTLLPRASMRLVRGLIRHEHHDLLNLFQEMVPDEIARIDLDDLSVADDLSRMRVMMTYLQSLASLFNLGPRLATAAYSQETLTATCWLR</sequence>
<gene>
    <name evidence="1" type="primary">TRX2</name>
    <name type="ORF">BDLF1</name>
</gene>
<evidence type="ECO:0000255" key="1">
    <source>
        <dbReference type="HAMAP-Rule" id="MF_04019"/>
    </source>
</evidence>
<evidence type="ECO:0000269" key="2">
    <source>
    </source>
</evidence>
<evidence type="ECO:0000269" key="3">
    <source>
    </source>
</evidence>
<proteinExistence type="evidence at protein level"/>
<dbReference type="EMBL" id="V01555">
    <property type="protein sequence ID" value="CAA24837.1"/>
    <property type="molecule type" value="Genomic_DNA"/>
</dbReference>
<dbReference type="EMBL" id="AJ507799">
    <property type="protein sequence ID" value="CAD53446.1"/>
    <property type="molecule type" value="Genomic_DNA"/>
</dbReference>
<dbReference type="PIR" id="S33042">
    <property type="entry name" value="S33042"/>
</dbReference>
<dbReference type="RefSeq" id="YP_401696.1">
    <property type="nucleotide sequence ID" value="NC_007605.1"/>
</dbReference>
<dbReference type="PDB" id="6W19">
    <property type="method" value="EM"/>
    <property type="resolution" value="5.50 A"/>
    <property type="chains" value="2/3/k/l/m/n/o/p/q/r/s/t=1-301"/>
</dbReference>
<dbReference type="PDB" id="6W2D">
    <property type="method" value="EM"/>
    <property type="resolution" value="4.00 A"/>
    <property type="chains" value="k/m/p/r=1-301"/>
</dbReference>
<dbReference type="PDB" id="6W2E">
    <property type="method" value="EM"/>
    <property type="resolution" value="4.40 A"/>
    <property type="chains" value="k/m/p/r=1-301"/>
</dbReference>
<dbReference type="PDB" id="7BQX">
    <property type="method" value="EM"/>
    <property type="resolution" value="4.20 A"/>
    <property type="chains" value="6/7/f/g=1-301"/>
</dbReference>
<dbReference type="PDB" id="7BR7">
    <property type="method" value="EM"/>
    <property type="resolution" value="4.30 A"/>
    <property type="chains" value="6/7/f/g=1-301"/>
</dbReference>
<dbReference type="PDB" id="7BR8">
    <property type="method" value="EM"/>
    <property type="resolution" value="3.80 A"/>
    <property type="chains" value="6/7/f/g=1-301"/>
</dbReference>
<dbReference type="PDB" id="7BSI">
    <property type="method" value="EM"/>
    <property type="resolution" value="4.10 A"/>
    <property type="chains" value="6/7/8/9/c/d/f/g/i/j=1-301"/>
</dbReference>
<dbReference type="PDBsum" id="6W19"/>
<dbReference type="PDBsum" id="6W2D"/>
<dbReference type="PDBsum" id="6W2E"/>
<dbReference type="PDBsum" id="7BQX"/>
<dbReference type="PDBsum" id="7BR7"/>
<dbReference type="PDBsum" id="7BR8"/>
<dbReference type="PDBsum" id="7BSI"/>
<dbReference type="EMDB" id="EMD-21504"/>
<dbReference type="EMDB" id="EMD-21525"/>
<dbReference type="EMDB" id="EMD-21526"/>
<dbReference type="EMDB" id="EMD-30157"/>
<dbReference type="EMDB" id="EMD-30158"/>
<dbReference type="EMDB" id="EMD-30159"/>
<dbReference type="EMDB" id="EMD-30162"/>
<dbReference type="SMR" id="P25214"/>
<dbReference type="IntAct" id="P25214">
    <property type="interactions" value="1"/>
</dbReference>
<dbReference type="MINT" id="P25214"/>
<dbReference type="DNASU" id="3783692"/>
<dbReference type="GeneID" id="3783692"/>
<dbReference type="KEGG" id="vg:3783692"/>
<dbReference type="Proteomes" id="UP000153037">
    <property type="component" value="Segment"/>
</dbReference>
<dbReference type="GO" id="GO:0042025">
    <property type="term" value="C:host cell nucleus"/>
    <property type="evidence" value="ECO:0007669"/>
    <property type="project" value="UniProtKB-SubCell"/>
</dbReference>
<dbReference type="GO" id="GO:0019028">
    <property type="term" value="C:viral capsid"/>
    <property type="evidence" value="ECO:0007669"/>
    <property type="project" value="UniProtKB-KW"/>
</dbReference>
<dbReference type="GO" id="GO:0005198">
    <property type="term" value="F:structural molecule activity"/>
    <property type="evidence" value="ECO:0007669"/>
    <property type="project" value="InterPro"/>
</dbReference>
<dbReference type="HAMAP" id="MF_04019">
    <property type="entry name" value="HSV_TRX2"/>
    <property type="match status" value="1"/>
</dbReference>
<dbReference type="InterPro" id="IPR002690">
    <property type="entry name" value="Herpes_capsid_2"/>
</dbReference>
<dbReference type="Pfam" id="PF01802">
    <property type="entry name" value="Herpes_V23"/>
    <property type="match status" value="1"/>
</dbReference>
<feature type="chain" id="PRO_0000115732" description="Triplex capsid protein 2">
    <location>
        <begin position="1"/>
        <end position="301"/>
    </location>
</feature>
<reference key="1">
    <citation type="journal article" date="1984" name="Nature">
        <title>DNA sequence and expression of the B95-8 Epstein-Barr virus genome.</title>
        <authorList>
            <person name="Baer R."/>
            <person name="Bankier A.T."/>
            <person name="Biggin M.D."/>
            <person name="Deininger P.L."/>
            <person name="Farrell P.J."/>
            <person name="Gibson T.J."/>
            <person name="Hatfull G."/>
            <person name="Hudson G.S."/>
            <person name="Satchwell S.C."/>
            <person name="Seguin C."/>
            <person name="Tuffnell P.S."/>
            <person name="Barrell B.G."/>
        </authorList>
    </citation>
    <scope>NUCLEOTIDE SEQUENCE [LARGE SCALE GENOMIC DNA]</scope>
</reference>
<reference key="2">
    <citation type="journal article" date="2003" name="Virology">
        <title>Updated Epstein-Barr virus (EBV) DNA sequence and analysis of a promoter for the BART (CST, BARF0) RNAs of EBV.</title>
        <authorList>
            <person name="de Jesus O."/>
            <person name="Smith P.R."/>
            <person name="Spender L.C."/>
            <person name="Elgueta Karstegl C."/>
            <person name="Niller H.H."/>
            <person name="Huang D."/>
            <person name="Farrell P.J."/>
        </authorList>
    </citation>
    <scope>GENOME REANNOTATION</scope>
</reference>
<reference key="3">
    <citation type="journal article" date="2004" name="Proc. Natl. Acad. Sci. U.S.A.">
        <title>Proteins of purified Epstein-Barr virus.</title>
        <authorList>
            <person name="Johannsen E."/>
            <person name="Luftig M."/>
            <person name="Chase M.R."/>
            <person name="Weicksel S."/>
            <person name="Cahir-McFarland E."/>
            <person name="Illanes D."/>
            <person name="Sarracino D."/>
            <person name="Kieff E."/>
        </authorList>
    </citation>
    <scope>SUBCELLULAR LOCATION</scope>
</reference>
<reference key="4">
    <citation type="journal article" date="2009" name="J. Virol.">
        <title>Self-assembly of Epstein-Barr virus capsids.</title>
        <authorList>
            <person name="Henson B.W."/>
            <person name="Perkins E.M."/>
            <person name="Cothran J.E."/>
            <person name="Desai P."/>
        </authorList>
    </citation>
    <scope>FUNCTION</scope>
</reference>
<organism>
    <name type="scientific">Epstein-Barr virus (strain B95-8)</name>
    <name type="common">HHV-4</name>
    <name type="synonym">Human herpesvirus 4</name>
    <dbReference type="NCBI Taxonomy" id="10377"/>
    <lineage>
        <taxon>Viruses</taxon>
        <taxon>Duplodnaviria</taxon>
        <taxon>Heunggongvirae</taxon>
        <taxon>Peploviricota</taxon>
        <taxon>Herviviricetes</taxon>
        <taxon>Herpesvirales</taxon>
        <taxon>Orthoherpesviridae</taxon>
        <taxon>Gammaherpesvirinae</taxon>
        <taxon>Lymphocryptovirus</taxon>
        <taxon>Lymphocryptovirus humangamma4</taxon>
        <taxon>Epstein-Barr virus (strain GD1)</taxon>
    </lineage>
</organism>
<protein>
    <recommendedName>
        <fullName evidence="1">Triplex capsid protein 2</fullName>
    </recommendedName>
</protein>
<accession>P25214</accession>
<accession>Q777C3</accession>
<comment type="function">
    <text evidence="1 3">Structural component of the T=16 icosahedral capsid. The capsid is composed of pentamers and hexamers of major capsid protein/MCP, which are linked together by heterotrimers called triplexes. These triplexes are formed by a single molecule of triplex protein 1/TRX1 and two copies of triplex protein 2/TRX2. Additionally, TRX1 is required for efficient transport of TRX2 to the nucleus, which is the site of capsid assembly.</text>
</comment>
<comment type="subunit">
    <text evidence="1">Interacts with TRX1 and major capisd protein/MCP.</text>
</comment>
<comment type="subcellular location">
    <subcellularLocation>
        <location evidence="1 2">Virion</location>
    </subcellularLocation>
    <subcellularLocation>
        <location evidence="1">Host nucleus</location>
    </subcellularLocation>
</comment>
<comment type="similarity">
    <text evidence="1">Belongs to the herpesviridae TRX2 protein family.</text>
</comment>
<name>TRX2_EBVB9</name>